<keyword id="KW-0238">DNA-binding</keyword>
<keyword id="KW-0539">Nucleus</keyword>
<keyword id="KW-1185">Reference proteome</keyword>
<keyword id="KW-0804">Transcription</keyword>
<keyword id="KW-0805">Transcription regulation</keyword>
<evidence type="ECO:0000255" key="1">
    <source>
        <dbReference type="PROSITE-ProRule" id="PRU00981"/>
    </source>
</evidence>
<evidence type="ECO:0000256" key="2">
    <source>
        <dbReference type="SAM" id="MobiDB-lite"/>
    </source>
</evidence>
<evidence type="ECO:0000269" key="3">
    <source>
    </source>
</evidence>
<evidence type="ECO:0000269" key="4">
    <source>
    </source>
</evidence>
<evidence type="ECO:0000269" key="5">
    <source>
    </source>
</evidence>
<evidence type="ECO:0000305" key="6"/>
<proteinExistence type="evidence at protein level"/>
<reference key="1">
    <citation type="journal article" date="2003" name="Mol. Biol. Evol.">
        <title>The basic helix-loop-helix transcription factor family in plants: a genome-wide study of protein structure and functional diversity.</title>
        <authorList>
            <person name="Heim M.A."/>
            <person name="Jakoby M."/>
            <person name="Werber M."/>
            <person name="Martin C."/>
            <person name="Weisshaar B."/>
            <person name="Bailey P.C."/>
        </authorList>
    </citation>
    <scope>NUCLEOTIDE SEQUENCE [MRNA]</scope>
    <scope>GENE FAMILY</scope>
    <scope>NOMENCLATURE</scope>
    <source>
        <strain>cv. Columbia</strain>
        <tissue>Seed</tissue>
    </source>
</reference>
<reference key="2">
    <citation type="journal article" date="2000" name="DNA Res.">
        <title>Structural analysis of Arabidopsis thaliana chromosome 5. X. Sequence features of the regions of 3,076,755 bp covered by sixty P1 and TAC clones.</title>
        <authorList>
            <person name="Sato S."/>
            <person name="Nakamura Y."/>
            <person name="Kaneko T."/>
            <person name="Katoh T."/>
            <person name="Asamizu E."/>
            <person name="Kotani H."/>
            <person name="Tabata S."/>
        </authorList>
    </citation>
    <scope>NUCLEOTIDE SEQUENCE [LARGE SCALE GENOMIC DNA]</scope>
    <source>
        <strain>cv. Columbia</strain>
    </source>
</reference>
<reference key="3">
    <citation type="journal article" date="2017" name="Plant J.">
        <title>Araport11: a complete reannotation of the Arabidopsis thaliana reference genome.</title>
        <authorList>
            <person name="Cheng C.Y."/>
            <person name="Krishnakumar V."/>
            <person name="Chan A.P."/>
            <person name="Thibaud-Nissen F."/>
            <person name="Schobel S."/>
            <person name="Town C.D."/>
        </authorList>
    </citation>
    <scope>GENOME REANNOTATION</scope>
    <source>
        <strain>cv. Columbia</strain>
    </source>
</reference>
<reference key="4">
    <citation type="journal article" date="2003" name="Science">
        <title>Empirical analysis of transcriptional activity in the Arabidopsis genome.</title>
        <authorList>
            <person name="Yamada K."/>
            <person name="Lim J."/>
            <person name="Dale J.M."/>
            <person name="Chen H."/>
            <person name="Shinn P."/>
            <person name="Palm C.J."/>
            <person name="Southwick A.M."/>
            <person name="Wu H.C."/>
            <person name="Kim C.J."/>
            <person name="Nguyen M."/>
            <person name="Pham P.K."/>
            <person name="Cheuk R.F."/>
            <person name="Karlin-Newmann G."/>
            <person name="Liu S.X."/>
            <person name="Lam B."/>
            <person name="Sakano H."/>
            <person name="Wu T."/>
            <person name="Yu G."/>
            <person name="Miranda M."/>
            <person name="Quach H.L."/>
            <person name="Tripp M."/>
            <person name="Chang C.H."/>
            <person name="Lee J.M."/>
            <person name="Toriumi M.J."/>
            <person name="Chan M.M."/>
            <person name="Tang C.C."/>
            <person name="Onodera C.S."/>
            <person name="Deng J.M."/>
            <person name="Akiyama K."/>
            <person name="Ansari Y."/>
            <person name="Arakawa T."/>
            <person name="Banh J."/>
            <person name="Banno F."/>
            <person name="Bowser L."/>
            <person name="Brooks S.Y."/>
            <person name="Carninci P."/>
            <person name="Chao Q."/>
            <person name="Choy N."/>
            <person name="Enju A."/>
            <person name="Goldsmith A.D."/>
            <person name="Gurjal M."/>
            <person name="Hansen N.F."/>
            <person name="Hayashizaki Y."/>
            <person name="Johnson-Hopson C."/>
            <person name="Hsuan V.W."/>
            <person name="Iida K."/>
            <person name="Karnes M."/>
            <person name="Khan S."/>
            <person name="Koesema E."/>
            <person name="Ishida J."/>
            <person name="Jiang P.X."/>
            <person name="Jones T."/>
            <person name="Kawai J."/>
            <person name="Kamiya A."/>
            <person name="Meyers C."/>
            <person name="Nakajima M."/>
            <person name="Narusaka M."/>
            <person name="Seki M."/>
            <person name="Sakurai T."/>
            <person name="Satou M."/>
            <person name="Tamse R."/>
            <person name="Vaysberg M."/>
            <person name="Wallender E.K."/>
            <person name="Wong C."/>
            <person name="Yamamura Y."/>
            <person name="Yuan S."/>
            <person name="Shinozaki K."/>
            <person name="Davis R.W."/>
            <person name="Theologis A."/>
            <person name="Ecker J.R."/>
        </authorList>
    </citation>
    <scope>NUCLEOTIDE SEQUENCE [LARGE SCALE MRNA]</scope>
    <source>
        <strain>cv. Columbia</strain>
    </source>
</reference>
<reference key="5">
    <citation type="submission" date="2002-03" db="EMBL/GenBank/DDBJ databases">
        <title>Full-length cDNA from Arabidopsis thaliana.</title>
        <authorList>
            <person name="Brover V.V."/>
            <person name="Troukhan M.E."/>
            <person name="Alexandrov N.A."/>
            <person name="Lu Y.-P."/>
            <person name="Flavell R.B."/>
            <person name="Feldmann K.A."/>
        </authorList>
    </citation>
    <scope>NUCLEOTIDE SEQUENCE [LARGE SCALE MRNA]</scope>
</reference>
<reference key="6">
    <citation type="journal article" date="2003" name="Plant Cell">
        <title>The Arabidopsis basic/helix-loop-helix transcription factor family.</title>
        <authorList>
            <person name="Toledo-Ortiz G."/>
            <person name="Huq E."/>
            <person name="Quail P.H."/>
        </authorList>
    </citation>
    <scope>GENE FAMILY</scope>
</reference>
<reference key="7">
    <citation type="journal article" date="2003" name="Plant Cell">
        <title>Update on the basic helix-loop-helix transcription factor gene family in Arabidopsis thaliana.</title>
        <authorList>
            <person name="Bailey P.C."/>
            <person name="Martin C."/>
            <person name="Toledo-Ortiz G."/>
            <person name="Quail P.H."/>
            <person name="Huq E."/>
            <person name="Heim M.A."/>
            <person name="Jakoby M."/>
            <person name="Werber M."/>
            <person name="Weisshaar B."/>
        </authorList>
    </citation>
    <scope>GENE FAMILY</scope>
    <scope>NOMENCLATURE</scope>
</reference>
<reference key="8">
    <citation type="journal article" date="2006" name="Genetics">
        <title>An Arabidopsis basic helix-loop-helix leucine zipper protein modulates metal homeostasis and auxin conjugate responsiveness.</title>
        <authorList>
            <person name="Rampey R.A."/>
            <person name="Woodward A.W."/>
            <person name="Hobbs B.N."/>
            <person name="Tierney M.P."/>
            <person name="Lahner B."/>
            <person name="Salt D.E."/>
            <person name="Bartel B."/>
        </authorList>
    </citation>
    <scope>FUNCTION</scope>
    <scope>DISRUPTION PHENOTYPE</scope>
    <scope>MUTAGENESIS OF 171-MET--ALA-234</scope>
    <scope>TISSUE SPECIFICITY</scope>
</reference>
<reference key="9">
    <citation type="journal article" date="2010" name="Plant Cell">
        <title>The bHLH transcription factor POPEYE regulates response to iron deficiency in Arabidopsis roots.</title>
        <authorList>
            <person name="Long T.A."/>
            <person name="Tsukagoshi H."/>
            <person name="Busch W."/>
            <person name="Lahner B."/>
            <person name="Salt D.E."/>
            <person name="Benfey P.N."/>
        </authorList>
    </citation>
    <scope>INTERACTION WITH BTS</scope>
    <source>
        <strain>cv. Columbia</strain>
    </source>
</reference>
<reference key="10">
    <citation type="journal article" date="2015" name="Plant Physiol.">
        <title>Iron-binding E3 ligase mediates iron response in plants by targeting basic helix-loop-helix transcription factors.</title>
        <authorList>
            <person name="Selote D."/>
            <person name="Samira R."/>
            <person name="Matthiadis A."/>
            <person name="Gillikin J.W."/>
            <person name="Long T.A."/>
        </authorList>
    </citation>
    <scope>INTERACTION WITH BTS AND BHLH47/PYE</scope>
    <scope>SUBCELLULAR LOCATION</scope>
    <source>
        <strain>cv. Columbia</strain>
    </source>
</reference>
<accession>Q9FH37</accession>
<accession>Q8LD53</accession>
<name>ILR3_ARATH</name>
<feature type="chain" id="PRO_0000358847" description="Transcription factor ILR3">
    <location>
        <begin position="1"/>
        <end position="234"/>
    </location>
</feature>
<feature type="domain" description="bHLH" evidence="1">
    <location>
        <begin position="71"/>
        <end position="122"/>
    </location>
</feature>
<feature type="region of interest" description="Disordered" evidence="2">
    <location>
        <begin position="34"/>
        <end position="85"/>
    </location>
</feature>
<feature type="compositionally biased region" description="Polar residues" evidence="2">
    <location>
        <begin position="36"/>
        <end position="54"/>
    </location>
</feature>
<feature type="mutagenesis site" description="In ilr3-1; confers an increased resistance to manganese and IAA conjugates." evidence="3">
    <original>MNAPQPSFFPAPPMMPTAFASAQGQAPGNKMVPIISYPGVAMWQFMPPASVDTSQDHVLRPPVA</original>
    <variation>FKYVVFG</variation>
    <location>
        <begin position="171"/>
        <end position="234"/>
    </location>
</feature>
<feature type="sequence conflict" description="In Ref. 5; AAM64276." evidence="6" ref="5">
    <original>M</original>
    <variation>I</variation>
    <location>
        <position position="171"/>
    </location>
</feature>
<protein>
    <recommendedName>
        <fullName>Transcription factor ILR3</fullName>
    </recommendedName>
    <alternativeName>
        <fullName>Basic helix-loop-helix protein 105</fullName>
        <shortName>AtbHLH105</shortName>
        <shortName>bHLH 105</shortName>
    </alternativeName>
    <alternativeName>
        <fullName>Protein IAA-LEUCINE RESISTANT 3</fullName>
    </alternativeName>
    <alternativeName>
        <fullName>Transcription factor EN 133</fullName>
    </alternativeName>
    <alternativeName>
        <fullName>bHLH transcription factor bHLH105</fullName>
    </alternativeName>
</protein>
<comment type="function">
    <text evidence="3">Transcription factor. Plays a role in resistance to amide-linked indole-3-acetic acid (IAA) conjugates such as IAA-Leu and IAA-Phe. May regulate gene expression in response to metal homeostasis changes.</text>
</comment>
<comment type="subunit">
    <text evidence="4 5 6">Homodimer (Probable). Interacts with BTS and BHLH47/PYE (PubMed:20675571, PubMed:25452667).</text>
</comment>
<comment type="subcellular location">
    <subcellularLocation>
        <location evidence="1 5">Nucleus</location>
    </subcellularLocation>
</comment>
<comment type="tissue specificity">
    <text evidence="3">Widely expressed throughout development, mostly in vasculatures.</text>
</comment>
<comment type="disruption phenotype">
    <text evidence="3">Plants are more sensitive to IAA conjugates.</text>
</comment>
<organism>
    <name type="scientific">Arabidopsis thaliana</name>
    <name type="common">Mouse-ear cress</name>
    <dbReference type="NCBI Taxonomy" id="3702"/>
    <lineage>
        <taxon>Eukaryota</taxon>
        <taxon>Viridiplantae</taxon>
        <taxon>Streptophyta</taxon>
        <taxon>Embryophyta</taxon>
        <taxon>Tracheophyta</taxon>
        <taxon>Spermatophyta</taxon>
        <taxon>Magnoliopsida</taxon>
        <taxon>eudicotyledons</taxon>
        <taxon>Gunneridae</taxon>
        <taxon>Pentapetalae</taxon>
        <taxon>rosids</taxon>
        <taxon>malvids</taxon>
        <taxon>Brassicales</taxon>
        <taxon>Brassicaceae</taxon>
        <taxon>Camelineae</taxon>
        <taxon>Arabidopsis</taxon>
    </lineage>
</organism>
<gene>
    <name type="primary">ILR3</name>
    <name type="synonym">BHLH105</name>
    <name type="synonym">EN133</name>
    <name type="ordered locus">At5g54680</name>
    <name type="ORF">K5F14.2</name>
</gene>
<sequence length="234" mass="25488">MVSPENANWICDLIDADYGSFTIQGPGFSWPVQQPIGVSSNSSAGVDGSAGNSEASKEPGSKKRGRCESSSATSSKACREKQRRDRLNDKFMELGAILEPGNPPKTDKAAILVDAVRMVTQLRGEAQKLKDSNSSLQDKIKELKTEKNELRDEKQRLKTEKEKLEQQLKAMNAPQPSFFPAPPMMPTAFASAQGQAPGNKMVPIISYPGVAMWQFMPPASVDTSQDHVLRPPVA</sequence>
<dbReference type="EMBL" id="AF488629">
    <property type="protein sequence ID" value="AAM10964.1"/>
    <property type="molecule type" value="mRNA"/>
</dbReference>
<dbReference type="EMBL" id="AB022214">
    <property type="protein sequence ID" value="BAB09934.1"/>
    <property type="molecule type" value="Genomic_DNA"/>
</dbReference>
<dbReference type="EMBL" id="CP002688">
    <property type="protein sequence ID" value="AED96526.1"/>
    <property type="molecule type" value="Genomic_DNA"/>
</dbReference>
<dbReference type="EMBL" id="AY054585">
    <property type="protein sequence ID" value="AAK96776.1"/>
    <property type="molecule type" value="mRNA"/>
</dbReference>
<dbReference type="EMBL" id="BT002189">
    <property type="protein sequence ID" value="AAN72200.1"/>
    <property type="molecule type" value="mRNA"/>
</dbReference>
<dbReference type="EMBL" id="AY086197">
    <property type="protein sequence ID" value="AAM64276.1"/>
    <property type="molecule type" value="mRNA"/>
</dbReference>
<dbReference type="RefSeq" id="NP_200279.1">
    <property type="nucleotide sequence ID" value="NM_124849.4"/>
</dbReference>
<dbReference type="SMR" id="Q9FH37"/>
<dbReference type="BioGRID" id="20801">
    <property type="interactions" value="4"/>
</dbReference>
<dbReference type="FunCoup" id="Q9FH37">
    <property type="interactions" value="2321"/>
</dbReference>
<dbReference type="IntAct" id="Q9FH37">
    <property type="interactions" value="1"/>
</dbReference>
<dbReference type="STRING" id="3702.Q9FH37"/>
<dbReference type="PaxDb" id="3702-AT5G54680.1"/>
<dbReference type="EnsemblPlants" id="AT5G54680.1">
    <property type="protein sequence ID" value="AT5G54680.1"/>
    <property type="gene ID" value="AT5G54680"/>
</dbReference>
<dbReference type="GeneID" id="835557"/>
<dbReference type="Gramene" id="AT5G54680.1">
    <property type="protein sequence ID" value="AT5G54680.1"/>
    <property type="gene ID" value="AT5G54680"/>
</dbReference>
<dbReference type="KEGG" id="ath:AT5G54680"/>
<dbReference type="Araport" id="AT5G54680"/>
<dbReference type="TAIR" id="AT5G54680">
    <property type="gene designation" value="ILR3"/>
</dbReference>
<dbReference type="eggNOG" id="ENOG502QSHF">
    <property type="taxonomic scope" value="Eukaryota"/>
</dbReference>
<dbReference type="HOGENOM" id="CLU_078927_0_0_1"/>
<dbReference type="InParanoid" id="Q9FH37"/>
<dbReference type="OMA" id="RENTNWI"/>
<dbReference type="OrthoDB" id="515493at2759"/>
<dbReference type="PhylomeDB" id="Q9FH37"/>
<dbReference type="PRO" id="PR:Q9FH37"/>
<dbReference type="Proteomes" id="UP000006548">
    <property type="component" value="Chromosome 5"/>
</dbReference>
<dbReference type="ExpressionAtlas" id="Q9FH37">
    <property type="expression patterns" value="baseline and differential"/>
</dbReference>
<dbReference type="GO" id="GO:0005634">
    <property type="term" value="C:nucleus"/>
    <property type="evidence" value="ECO:0000314"/>
    <property type="project" value="UniProtKB"/>
</dbReference>
<dbReference type="GO" id="GO:0003700">
    <property type="term" value="F:DNA-binding transcription factor activity"/>
    <property type="evidence" value="ECO:0000250"/>
    <property type="project" value="TAIR"/>
</dbReference>
<dbReference type="GO" id="GO:0046983">
    <property type="term" value="F:protein dimerization activity"/>
    <property type="evidence" value="ECO:0007669"/>
    <property type="project" value="InterPro"/>
</dbReference>
<dbReference type="GO" id="GO:0000976">
    <property type="term" value="F:transcription cis-regulatory region binding"/>
    <property type="evidence" value="ECO:0000353"/>
    <property type="project" value="TAIR"/>
</dbReference>
<dbReference type="GO" id="GO:0019760">
    <property type="term" value="P:glucosinolate metabolic process"/>
    <property type="evidence" value="ECO:0000315"/>
    <property type="project" value="TAIR"/>
</dbReference>
<dbReference type="GO" id="GO:0006879">
    <property type="term" value="P:intracellular iron ion homeostasis"/>
    <property type="evidence" value="ECO:0007669"/>
    <property type="project" value="InterPro"/>
</dbReference>
<dbReference type="GO" id="GO:0006355">
    <property type="term" value="P:regulation of DNA-templated transcription"/>
    <property type="evidence" value="ECO:0000304"/>
    <property type="project" value="TAIR"/>
</dbReference>
<dbReference type="CDD" id="cd11446">
    <property type="entry name" value="bHLH_AtILR3_like"/>
    <property type="match status" value="1"/>
</dbReference>
<dbReference type="FunFam" id="4.10.280.10:FF:000104">
    <property type="entry name" value="Transcription factor bHLH34"/>
    <property type="match status" value="1"/>
</dbReference>
<dbReference type="Gene3D" id="1.20.5.1000">
    <property type="entry name" value="arf6 gtpase in complex with a specific effector, jip4"/>
    <property type="match status" value="1"/>
</dbReference>
<dbReference type="Gene3D" id="4.10.280.10">
    <property type="entry name" value="Helix-loop-helix DNA-binding domain"/>
    <property type="match status" value="1"/>
</dbReference>
<dbReference type="InterPro" id="IPR011598">
    <property type="entry name" value="bHLH_dom"/>
</dbReference>
<dbReference type="InterPro" id="IPR036638">
    <property type="entry name" value="HLH_DNA-bd_sf"/>
</dbReference>
<dbReference type="InterPro" id="IPR044818">
    <property type="entry name" value="ILR3-like"/>
</dbReference>
<dbReference type="PANTHER" id="PTHR46133">
    <property type="entry name" value="BHLH TRANSCRIPTION FACTOR"/>
    <property type="match status" value="1"/>
</dbReference>
<dbReference type="PANTHER" id="PTHR46133:SF1">
    <property type="entry name" value="TRANSCRIPTION FACTOR ILR3"/>
    <property type="match status" value="1"/>
</dbReference>
<dbReference type="Pfam" id="PF00010">
    <property type="entry name" value="HLH"/>
    <property type="match status" value="1"/>
</dbReference>
<dbReference type="SMART" id="SM00353">
    <property type="entry name" value="HLH"/>
    <property type="match status" value="1"/>
</dbReference>
<dbReference type="SUPFAM" id="SSF47459">
    <property type="entry name" value="HLH, helix-loop-helix DNA-binding domain"/>
    <property type="match status" value="1"/>
</dbReference>
<dbReference type="PROSITE" id="PS50888">
    <property type="entry name" value="BHLH"/>
    <property type="match status" value="1"/>
</dbReference>